<evidence type="ECO:0000250" key="1"/>
<evidence type="ECO:0000255" key="2"/>
<evidence type="ECO:0000305" key="3"/>
<protein>
    <recommendedName>
        <fullName>HTH-type transcriptional regulator SarT</fullName>
    </recommendedName>
    <alternativeName>
        <fullName>Staphylococcal accessory regulator T</fullName>
    </alternativeName>
</protein>
<organism>
    <name type="scientific">Staphylococcus aureus (strain N315)</name>
    <dbReference type="NCBI Taxonomy" id="158879"/>
    <lineage>
        <taxon>Bacteria</taxon>
        <taxon>Bacillati</taxon>
        <taxon>Bacillota</taxon>
        <taxon>Bacilli</taxon>
        <taxon>Bacillales</taxon>
        <taxon>Staphylococcaceae</taxon>
        <taxon>Staphylococcus</taxon>
    </lineage>
</organism>
<name>SART_STAAN</name>
<comment type="function">
    <text evidence="1">Transcriptional regulator acting as an intermediary between major regulators SarA and agr and virulence genes. Represses alpha-hemolysin (hla) gene expression (By similarity).</text>
</comment>
<comment type="subcellular location">
    <subcellularLocation>
        <location evidence="1">Cytoplasm</location>
    </subcellularLocation>
</comment>
<comment type="similarity">
    <text evidence="3">Belongs to the SarA family.</text>
</comment>
<comment type="sequence caution" evidence="3">
    <conflict type="erroneous initiation">
        <sequence resource="EMBL-CDS" id="BAB43589"/>
    </conflict>
</comment>
<accession>Q7A3K1</accession>
<dbReference type="EMBL" id="BA000018">
    <property type="protein sequence ID" value="BAB43589.1"/>
    <property type="status" value="ALT_INIT"/>
    <property type="molecule type" value="Genomic_DNA"/>
</dbReference>
<dbReference type="PIR" id="C90053">
    <property type="entry name" value="C90053"/>
</dbReference>
<dbReference type="RefSeq" id="WP_000998872.1">
    <property type="nucleotide sequence ID" value="NC_002745.2"/>
</dbReference>
<dbReference type="SMR" id="Q7A3K1"/>
<dbReference type="EnsemblBacteria" id="BAB43589">
    <property type="protein sequence ID" value="BAB43589"/>
    <property type="gene ID" value="BAB43589"/>
</dbReference>
<dbReference type="KEGG" id="sau:SA2286"/>
<dbReference type="HOGENOM" id="CLU_2095348_0_0_9"/>
<dbReference type="GO" id="GO:0005737">
    <property type="term" value="C:cytoplasm"/>
    <property type="evidence" value="ECO:0007669"/>
    <property type="project" value="UniProtKB-SubCell"/>
</dbReference>
<dbReference type="GO" id="GO:0003677">
    <property type="term" value="F:DNA binding"/>
    <property type="evidence" value="ECO:0007669"/>
    <property type="project" value="UniProtKB-KW"/>
</dbReference>
<dbReference type="GO" id="GO:0003700">
    <property type="term" value="F:DNA-binding transcription factor activity"/>
    <property type="evidence" value="ECO:0007669"/>
    <property type="project" value="InterPro"/>
</dbReference>
<dbReference type="GO" id="GO:0006950">
    <property type="term" value="P:response to stress"/>
    <property type="evidence" value="ECO:0007669"/>
    <property type="project" value="TreeGrafter"/>
</dbReference>
<dbReference type="Gene3D" id="1.10.10.10">
    <property type="entry name" value="Winged helix-like DNA-binding domain superfamily/Winged helix DNA-binding domain"/>
    <property type="match status" value="1"/>
</dbReference>
<dbReference type="InterPro" id="IPR039422">
    <property type="entry name" value="MarR/SlyA-like"/>
</dbReference>
<dbReference type="InterPro" id="IPR010166">
    <property type="entry name" value="SarA/Rot_dom"/>
</dbReference>
<dbReference type="InterPro" id="IPR055166">
    <property type="entry name" value="Transc_reg_Sar_Rot_HTH"/>
</dbReference>
<dbReference type="InterPro" id="IPR036388">
    <property type="entry name" value="WH-like_DNA-bd_sf"/>
</dbReference>
<dbReference type="InterPro" id="IPR036390">
    <property type="entry name" value="WH_DNA-bd_sf"/>
</dbReference>
<dbReference type="NCBIfam" id="TIGR01889">
    <property type="entry name" value="Staph_reg_Sar"/>
    <property type="match status" value="1"/>
</dbReference>
<dbReference type="PANTHER" id="PTHR33164:SF5">
    <property type="entry name" value="ORGANIC HYDROPEROXIDE RESISTANCE TRANSCRIPTIONAL REGULATOR"/>
    <property type="match status" value="1"/>
</dbReference>
<dbReference type="PANTHER" id="PTHR33164">
    <property type="entry name" value="TRANSCRIPTIONAL REGULATOR, MARR FAMILY"/>
    <property type="match status" value="1"/>
</dbReference>
<dbReference type="Pfam" id="PF22381">
    <property type="entry name" value="Staph_reg_Sar_Rot"/>
    <property type="match status" value="1"/>
</dbReference>
<dbReference type="SUPFAM" id="SSF46785">
    <property type="entry name" value="Winged helix' DNA-binding domain"/>
    <property type="match status" value="1"/>
</dbReference>
<gene>
    <name type="primary">sarT</name>
    <name type="ordered locus">SA2286</name>
</gene>
<proteinExistence type="inferred from homology"/>
<reference key="1">
    <citation type="journal article" date="2001" name="Lancet">
        <title>Whole genome sequencing of meticillin-resistant Staphylococcus aureus.</title>
        <authorList>
            <person name="Kuroda M."/>
            <person name="Ohta T."/>
            <person name="Uchiyama I."/>
            <person name="Baba T."/>
            <person name="Yuzawa H."/>
            <person name="Kobayashi I."/>
            <person name="Cui L."/>
            <person name="Oguchi A."/>
            <person name="Aoki K."/>
            <person name="Nagai Y."/>
            <person name="Lian J.-Q."/>
            <person name="Ito T."/>
            <person name="Kanamori M."/>
            <person name="Matsumaru H."/>
            <person name="Maruyama A."/>
            <person name="Murakami H."/>
            <person name="Hosoyama A."/>
            <person name="Mizutani-Ui Y."/>
            <person name="Takahashi N.K."/>
            <person name="Sawano T."/>
            <person name="Inoue R."/>
            <person name="Kaito C."/>
            <person name="Sekimizu K."/>
            <person name="Hirakawa H."/>
            <person name="Kuhara S."/>
            <person name="Goto S."/>
            <person name="Yabuzaki J."/>
            <person name="Kanehisa M."/>
            <person name="Yamashita A."/>
            <person name="Oshima K."/>
            <person name="Furuya K."/>
            <person name="Yoshino C."/>
            <person name="Shiba T."/>
            <person name="Hattori M."/>
            <person name="Ogasawara N."/>
            <person name="Hayashi H."/>
            <person name="Hiramatsu K."/>
        </authorList>
    </citation>
    <scope>NUCLEOTIDE SEQUENCE [LARGE SCALE GENOMIC DNA]</scope>
    <source>
        <strain>N315</strain>
    </source>
</reference>
<feature type="chain" id="PRO_0000219599" description="HTH-type transcriptional regulator SarT">
    <location>
        <begin position="1"/>
        <end position="118"/>
    </location>
</feature>
<feature type="DNA-binding region" description="H-T-H motif" evidence="2">
    <location>
        <begin position="55"/>
        <end position="78"/>
    </location>
</feature>
<sequence length="118" mass="14002">MNDLKSKSNIKLMKRVLTTYELRKYLKKYFCLTLDNYLVLAYLDVFKNDEGKYFMRDIISYIGIDQSRIVKSVKELSKKGYLNKCRDPHDSRNVIIVVSVKQHNYIKNLLSEININET</sequence>
<keyword id="KW-0010">Activator</keyword>
<keyword id="KW-0963">Cytoplasm</keyword>
<keyword id="KW-0238">DNA-binding</keyword>
<keyword id="KW-0678">Repressor</keyword>
<keyword id="KW-0804">Transcription</keyword>
<keyword id="KW-0805">Transcription regulation</keyword>
<keyword id="KW-0843">Virulence</keyword>